<proteinExistence type="inferred from homology"/>
<evidence type="ECO:0000250" key="1"/>
<evidence type="ECO:0000255" key="2">
    <source>
        <dbReference type="HAMAP-Rule" id="MF_00047"/>
    </source>
</evidence>
<keyword id="KW-0067">ATP-binding</keyword>
<keyword id="KW-0133">Cell shape</keyword>
<keyword id="KW-0961">Cell wall biogenesis/degradation</keyword>
<keyword id="KW-0963">Cytoplasm</keyword>
<keyword id="KW-0436">Ligase</keyword>
<keyword id="KW-0460">Magnesium</keyword>
<keyword id="KW-0464">Manganese</keyword>
<keyword id="KW-0479">Metal-binding</keyword>
<keyword id="KW-0547">Nucleotide-binding</keyword>
<keyword id="KW-0573">Peptidoglycan synthesis</keyword>
<comment type="function">
    <text evidence="2">Cell wall formation.</text>
</comment>
<comment type="catalytic activity">
    <reaction evidence="2">
        <text>2 D-alanine + ATP = D-alanyl-D-alanine + ADP + phosphate + H(+)</text>
        <dbReference type="Rhea" id="RHEA:11224"/>
        <dbReference type="ChEBI" id="CHEBI:15378"/>
        <dbReference type="ChEBI" id="CHEBI:30616"/>
        <dbReference type="ChEBI" id="CHEBI:43474"/>
        <dbReference type="ChEBI" id="CHEBI:57416"/>
        <dbReference type="ChEBI" id="CHEBI:57822"/>
        <dbReference type="ChEBI" id="CHEBI:456216"/>
        <dbReference type="EC" id="6.3.2.4"/>
    </reaction>
</comment>
<comment type="cofactor">
    <cofactor evidence="1">
        <name>Mg(2+)</name>
        <dbReference type="ChEBI" id="CHEBI:18420"/>
    </cofactor>
    <cofactor evidence="1">
        <name>Mn(2+)</name>
        <dbReference type="ChEBI" id="CHEBI:29035"/>
    </cofactor>
    <text evidence="1">Binds 2 magnesium or manganese ions per subunit.</text>
</comment>
<comment type="pathway">
    <text evidence="2">Cell wall biogenesis; peptidoglycan biosynthesis.</text>
</comment>
<comment type="subcellular location">
    <subcellularLocation>
        <location evidence="2">Cytoplasm</location>
    </subcellularLocation>
</comment>
<comment type="similarity">
    <text evidence="2">Belongs to the D-alanine--D-alanine ligase family.</text>
</comment>
<dbReference type="EC" id="6.3.2.4" evidence="2"/>
<dbReference type="EMBL" id="BA000012">
    <property type="protein sequence ID" value="BAB48898.1"/>
    <property type="molecule type" value="Genomic_DNA"/>
</dbReference>
<dbReference type="RefSeq" id="WP_010910251.1">
    <property type="nucleotide sequence ID" value="NC_002678.2"/>
</dbReference>
<dbReference type="SMR" id="Q98KB6"/>
<dbReference type="KEGG" id="mlo:mll1551"/>
<dbReference type="eggNOG" id="COG1181">
    <property type="taxonomic scope" value="Bacteria"/>
</dbReference>
<dbReference type="HOGENOM" id="CLU_039268_1_1_5"/>
<dbReference type="UniPathway" id="UPA00219"/>
<dbReference type="Proteomes" id="UP000000552">
    <property type="component" value="Chromosome"/>
</dbReference>
<dbReference type="GO" id="GO:0005737">
    <property type="term" value="C:cytoplasm"/>
    <property type="evidence" value="ECO:0007669"/>
    <property type="project" value="UniProtKB-SubCell"/>
</dbReference>
<dbReference type="GO" id="GO:0005524">
    <property type="term" value="F:ATP binding"/>
    <property type="evidence" value="ECO:0007669"/>
    <property type="project" value="UniProtKB-KW"/>
</dbReference>
<dbReference type="GO" id="GO:0008716">
    <property type="term" value="F:D-alanine-D-alanine ligase activity"/>
    <property type="evidence" value="ECO:0007669"/>
    <property type="project" value="UniProtKB-UniRule"/>
</dbReference>
<dbReference type="GO" id="GO:0046872">
    <property type="term" value="F:metal ion binding"/>
    <property type="evidence" value="ECO:0007669"/>
    <property type="project" value="UniProtKB-KW"/>
</dbReference>
<dbReference type="GO" id="GO:0071555">
    <property type="term" value="P:cell wall organization"/>
    <property type="evidence" value="ECO:0007669"/>
    <property type="project" value="UniProtKB-KW"/>
</dbReference>
<dbReference type="GO" id="GO:0009252">
    <property type="term" value="P:peptidoglycan biosynthetic process"/>
    <property type="evidence" value="ECO:0007669"/>
    <property type="project" value="UniProtKB-UniRule"/>
</dbReference>
<dbReference type="GO" id="GO:0008360">
    <property type="term" value="P:regulation of cell shape"/>
    <property type="evidence" value="ECO:0007669"/>
    <property type="project" value="UniProtKB-KW"/>
</dbReference>
<dbReference type="Gene3D" id="3.40.50.20">
    <property type="match status" value="1"/>
</dbReference>
<dbReference type="Gene3D" id="3.30.1490.20">
    <property type="entry name" value="ATP-grasp fold, A domain"/>
    <property type="match status" value="1"/>
</dbReference>
<dbReference type="Gene3D" id="3.30.470.20">
    <property type="entry name" value="ATP-grasp fold, B domain"/>
    <property type="match status" value="1"/>
</dbReference>
<dbReference type="HAMAP" id="MF_00047">
    <property type="entry name" value="Dala_Dala_lig"/>
    <property type="match status" value="1"/>
</dbReference>
<dbReference type="InterPro" id="IPR011761">
    <property type="entry name" value="ATP-grasp"/>
</dbReference>
<dbReference type="InterPro" id="IPR013815">
    <property type="entry name" value="ATP_grasp_subdomain_1"/>
</dbReference>
<dbReference type="InterPro" id="IPR000291">
    <property type="entry name" value="D-Ala_lig_Van_CS"/>
</dbReference>
<dbReference type="InterPro" id="IPR005905">
    <property type="entry name" value="D_ala_D_ala"/>
</dbReference>
<dbReference type="InterPro" id="IPR011095">
    <property type="entry name" value="Dala_Dala_lig_C"/>
</dbReference>
<dbReference type="InterPro" id="IPR011127">
    <property type="entry name" value="Dala_Dala_lig_N"/>
</dbReference>
<dbReference type="InterPro" id="IPR016185">
    <property type="entry name" value="PreATP-grasp_dom_sf"/>
</dbReference>
<dbReference type="NCBIfam" id="TIGR01205">
    <property type="entry name" value="D_ala_D_alaTIGR"/>
    <property type="match status" value="1"/>
</dbReference>
<dbReference type="NCBIfam" id="NF002378">
    <property type="entry name" value="PRK01372.1"/>
    <property type="match status" value="1"/>
</dbReference>
<dbReference type="PANTHER" id="PTHR23132">
    <property type="entry name" value="D-ALANINE--D-ALANINE LIGASE"/>
    <property type="match status" value="1"/>
</dbReference>
<dbReference type="PANTHER" id="PTHR23132:SF23">
    <property type="entry name" value="D-ALANINE--D-ALANINE LIGASE B"/>
    <property type="match status" value="1"/>
</dbReference>
<dbReference type="Pfam" id="PF07478">
    <property type="entry name" value="Dala_Dala_lig_C"/>
    <property type="match status" value="1"/>
</dbReference>
<dbReference type="Pfam" id="PF01820">
    <property type="entry name" value="Dala_Dala_lig_N"/>
    <property type="match status" value="1"/>
</dbReference>
<dbReference type="PIRSF" id="PIRSF039102">
    <property type="entry name" value="Ddl/VanB"/>
    <property type="match status" value="1"/>
</dbReference>
<dbReference type="SUPFAM" id="SSF56059">
    <property type="entry name" value="Glutathione synthetase ATP-binding domain-like"/>
    <property type="match status" value="1"/>
</dbReference>
<dbReference type="SUPFAM" id="SSF52440">
    <property type="entry name" value="PreATP-grasp domain"/>
    <property type="match status" value="1"/>
</dbReference>
<dbReference type="PROSITE" id="PS50975">
    <property type="entry name" value="ATP_GRASP"/>
    <property type="match status" value="1"/>
</dbReference>
<dbReference type="PROSITE" id="PS00843">
    <property type="entry name" value="DALA_DALA_LIGASE_1"/>
    <property type="match status" value="1"/>
</dbReference>
<dbReference type="PROSITE" id="PS00844">
    <property type="entry name" value="DALA_DALA_LIGASE_2"/>
    <property type="match status" value="1"/>
</dbReference>
<name>DDLB_RHILO</name>
<reference key="1">
    <citation type="journal article" date="2000" name="DNA Res.">
        <title>Complete genome structure of the nitrogen-fixing symbiotic bacterium Mesorhizobium loti.</title>
        <authorList>
            <person name="Kaneko T."/>
            <person name="Nakamura Y."/>
            <person name="Sato S."/>
            <person name="Asamizu E."/>
            <person name="Kato T."/>
            <person name="Sasamoto S."/>
            <person name="Watanabe A."/>
            <person name="Idesawa K."/>
            <person name="Ishikawa A."/>
            <person name="Kawashima K."/>
            <person name="Kimura T."/>
            <person name="Kishida Y."/>
            <person name="Kiyokawa C."/>
            <person name="Kohara M."/>
            <person name="Matsumoto M."/>
            <person name="Matsuno A."/>
            <person name="Mochizuki Y."/>
            <person name="Nakayama S."/>
            <person name="Nakazaki N."/>
            <person name="Shimpo S."/>
            <person name="Sugimoto M."/>
            <person name="Takeuchi C."/>
            <person name="Yamada M."/>
            <person name="Tabata S."/>
        </authorList>
    </citation>
    <scope>NUCLEOTIDE SEQUENCE [LARGE SCALE GENOMIC DNA]</scope>
    <source>
        <strain>LMG 29417 / CECT 9101 / MAFF 303099</strain>
    </source>
</reference>
<feature type="chain" id="PRO_0000177863" description="D-alanine--D-alanine ligase B">
    <location>
        <begin position="1"/>
        <end position="308"/>
    </location>
</feature>
<feature type="domain" description="ATP-grasp" evidence="2">
    <location>
        <begin position="102"/>
        <end position="302"/>
    </location>
</feature>
<feature type="binding site" evidence="2">
    <location>
        <begin position="128"/>
        <end position="183"/>
    </location>
    <ligand>
        <name>ATP</name>
        <dbReference type="ChEBI" id="CHEBI:30616"/>
    </ligand>
</feature>
<feature type="binding site" evidence="2">
    <location>
        <position position="252"/>
    </location>
    <ligand>
        <name>Mg(2+)</name>
        <dbReference type="ChEBI" id="CHEBI:18420"/>
        <label>1</label>
    </ligand>
</feature>
<feature type="binding site" evidence="2">
    <location>
        <position position="269"/>
    </location>
    <ligand>
        <name>Mg(2+)</name>
        <dbReference type="ChEBI" id="CHEBI:18420"/>
        <label>1</label>
    </ligand>
</feature>
<feature type="binding site" evidence="2">
    <location>
        <position position="269"/>
    </location>
    <ligand>
        <name>Mg(2+)</name>
        <dbReference type="ChEBI" id="CHEBI:18420"/>
        <label>2</label>
    </ligand>
</feature>
<feature type="binding site" evidence="2">
    <location>
        <position position="271"/>
    </location>
    <ligand>
        <name>Mg(2+)</name>
        <dbReference type="ChEBI" id="CHEBI:18420"/>
        <label>2</label>
    </ligand>
</feature>
<accession>Q98KB6</accession>
<organism>
    <name type="scientific">Mesorhizobium japonicum (strain LMG 29417 / CECT 9101 / MAFF 303099)</name>
    <name type="common">Mesorhizobium loti (strain MAFF 303099)</name>
    <dbReference type="NCBI Taxonomy" id="266835"/>
    <lineage>
        <taxon>Bacteria</taxon>
        <taxon>Pseudomonadati</taxon>
        <taxon>Pseudomonadota</taxon>
        <taxon>Alphaproteobacteria</taxon>
        <taxon>Hyphomicrobiales</taxon>
        <taxon>Phyllobacteriaceae</taxon>
        <taxon>Mesorhizobium</taxon>
    </lineage>
</organism>
<gene>
    <name evidence="2" type="primary">ddlB</name>
    <name type="ordered locus">mll1551</name>
</gene>
<protein>
    <recommendedName>
        <fullName evidence="2">D-alanine--D-alanine ligase B</fullName>
        <ecNumber evidence="2">6.3.2.4</ecNumber>
    </recommendedName>
    <alternativeName>
        <fullName evidence="2">D-Ala-D-Ala ligase B</fullName>
    </alternativeName>
    <alternativeName>
        <fullName evidence="2">D-alanylalanine synthetase B</fullName>
    </alternativeName>
</protein>
<sequence length="308" mass="33179">MKSKHVAVLLGGFSSERPVSLSSGKACADALENEGYQVTRVDVGRDVGSVLAELKPDVAFNALHGPFGEDGTIQGILEYLGIPYTHSGVLASALAMNKEQAKKIVKTVGVPVAESKVANRFAIQNKHPMKPPYVIKPVNEGSSFGVVIVSEGQSHPPQVVGSSEWKYGDTVMVERYIHGRELTCAVMGDVALGVCEIIPTGHSFYDYDSKYVAGGSKHECPAKVSPNIYQKIQTLALKAHQAVGCRGVSRSDFRYDDRHSENGEVVWLEVNTQPGMTPTSLVPEIAAHAGHSFGELLSWMVEDASCLR</sequence>